<feature type="chain" id="PRO_0000099375" description="Protein OPG034">
    <location>
        <begin position="1"/>
        <end position="229"/>
    </location>
</feature>
<sequence length="229" mass="27029">MVKNNKIQKNKISNSCRMIMSTDPNNILMRHLKNLTDDEFKCIIHRSSDFLYLSDSDYTSITKETLVSEIVEEYPDDCNKILAIIFLVLDKDIDVDIKTKLKPKPAVRFAILDKMTEDIKLTDLVRHYFRYIEQDIPLGPLFKKIDSYRTRAINKYSKELGLATEYFNKYGHLMFYTLPIPYNRFFCRNSIGFLAVLSPTIGHVKAFYKFIEYVSIDDRRKFKKELMSK</sequence>
<protein>
    <recommendedName>
        <fullName>Protein OPG034</fullName>
    </recommendedName>
</protein>
<gene>
    <name type="primary">OPG034</name>
    <name type="synonym">C1L</name>
    <name type="ORF">VACWR027</name>
</gene>
<name>PG034_VACCW</name>
<organism>
    <name type="scientific">Vaccinia virus (strain Western Reserve)</name>
    <name type="common">VACV</name>
    <name type="synonym">Vaccinia virus (strain WR)</name>
    <dbReference type="NCBI Taxonomy" id="10254"/>
    <lineage>
        <taxon>Viruses</taxon>
        <taxon>Varidnaviria</taxon>
        <taxon>Bamfordvirae</taxon>
        <taxon>Nucleocytoviricota</taxon>
        <taxon>Pokkesviricetes</taxon>
        <taxon>Chitovirales</taxon>
        <taxon>Poxviridae</taxon>
        <taxon>Chordopoxvirinae</taxon>
        <taxon>Orthopoxvirus</taxon>
        <taxon>Vaccinia virus</taxon>
    </lineage>
</organism>
<dbReference type="EMBL" id="M22812">
    <property type="protein sequence ID" value="AAA69607.1"/>
    <property type="molecule type" value="Genomic_DNA"/>
</dbReference>
<dbReference type="EMBL" id="AY243312">
    <property type="protein sequence ID" value="AAO89306.1"/>
    <property type="molecule type" value="Genomic_DNA"/>
</dbReference>
<dbReference type="PIR" id="G33348">
    <property type="entry name" value="WZVZB7"/>
</dbReference>
<dbReference type="RefSeq" id="YP_232909.1">
    <property type="nucleotide sequence ID" value="NC_006998.1"/>
</dbReference>
<dbReference type="DNASU" id="3707642"/>
<dbReference type="GeneID" id="3707642"/>
<dbReference type="KEGG" id="vg:3707642"/>
<dbReference type="Proteomes" id="UP000000344">
    <property type="component" value="Genome"/>
</dbReference>
<dbReference type="InterPro" id="IPR008724">
    <property type="entry name" value="Orthopox_C1"/>
</dbReference>
<dbReference type="InterPro" id="IPR022819">
    <property type="entry name" value="Poxvirus_Bcl-2-like"/>
</dbReference>
<dbReference type="Pfam" id="PF06227">
    <property type="entry name" value="Poxv_Bcl-2-like"/>
    <property type="match status" value="1"/>
</dbReference>
<dbReference type="PIRSF" id="PIRSF003783">
    <property type="entry name" value="VAC_C1L"/>
    <property type="match status" value="1"/>
</dbReference>
<keyword id="KW-0244">Early protein</keyword>
<keyword id="KW-1185">Reference proteome</keyword>
<reference key="1">
    <citation type="journal article" date="1988" name="Virology">
        <title>Analysis of a large cluster of nonessential genes deleted from a vaccinia virus terminal transposition mutant.</title>
        <authorList>
            <person name="Kotwal G.J."/>
            <person name="Moss B."/>
        </authorList>
    </citation>
    <scope>NUCLEOTIDE SEQUENCE [GENOMIC DNA]</scope>
</reference>
<reference key="2">
    <citation type="submission" date="2003-02" db="EMBL/GenBank/DDBJ databases">
        <title>Sequencing of the coding region of Vaccinia-WR to an average 9-fold redundancy and an error rate of 0.16/10kb.</title>
        <authorList>
            <person name="Esposito J.J."/>
            <person name="Frace A.M."/>
            <person name="Sammons S.A."/>
            <person name="Olsen-Rasmussen M."/>
            <person name="Osborne J."/>
            <person name="Wohlhueter R."/>
        </authorList>
    </citation>
    <scope>NUCLEOTIDE SEQUENCE [LARGE SCALE GENOMIC DNA]</scope>
</reference>
<reference key="3">
    <citation type="journal article" date="2015" name="J. Virol.">
        <title>Deciphering poxvirus gene expression by RNA sequencing and ribosome profiling.</title>
        <authorList>
            <person name="Yang Z."/>
            <person name="Cao S."/>
            <person name="Martens C.A."/>
            <person name="Porcella S.F."/>
            <person name="Xie Z."/>
            <person name="Ma M."/>
            <person name="Shen B."/>
            <person name="Moss B."/>
        </authorList>
    </citation>
    <scope>INDUCTION</scope>
</reference>
<comment type="induction">
    <text evidence="1">Expressed in the early phase of the viral replicative cycle.</text>
</comment>
<comment type="similarity">
    <text evidence="2">Belongs to the orthopoxvirus OPG034 family.</text>
</comment>
<organismHost>
    <name type="scientific">Bos taurus</name>
    <name type="common">Bovine</name>
    <dbReference type="NCBI Taxonomy" id="9913"/>
</organismHost>
<proteinExistence type="evidence at transcript level"/>
<accession>P17368</accession>
<accession>Q76ZY2</accession>
<evidence type="ECO:0000269" key="1">
    <source>
    </source>
</evidence>
<evidence type="ECO:0000305" key="2"/>